<comment type="function">
    <text evidence="1">Component of the eukaryotic translation initiation factor 3 (eIF-3) complex, which is involved in protein synthesis of a specialized repertoire of mRNAs and, together with other initiation factors, stimulates binding of mRNA and methionyl-tRNAi to the 40S ribosome. The eIF-3 complex specifically targets and initiates translation of a subset of mRNAs involved in cell proliferation.</text>
</comment>
<comment type="subunit">
    <text evidence="1">Component of the eukaryotic translation initiation factor 3 (eIF-3) complex.</text>
</comment>
<comment type="subcellular location">
    <subcellularLocation>
        <location evidence="1">Cytoplasm</location>
    </subcellularLocation>
</comment>
<comment type="similarity">
    <text evidence="1">Belongs to the eIF-3 subunit F family.</text>
</comment>
<accession>Q7QD36</accession>
<name>EIF3F_ANOGA</name>
<protein>
    <recommendedName>
        <fullName evidence="1">Eukaryotic translation initiation factor 3 subunit F</fullName>
        <shortName evidence="1">eIF3f</shortName>
    </recommendedName>
    <alternativeName>
        <fullName evidence="1">Eukaryotic translation initiation factor 3 subunit 5</fullName>
    </alternativeName>
</protein>
<sequence length="287" mass="31594">MSTINLPLNLTVRVHPVVLFQIVDAYERRNADSERVIGTLLGSVDKGVVEVTNCFCLPHKEHTDQVEAELGYASDLYELNQRVNASENIVGWWATGQEVTNHSSVIHEYYARECTNPVHLTLDTSLTGARMGIKAYVCVSLGVPGGKSGCMFTPINVEVTSYEPEIVGLQLCMKTIGVQSNPSRPRTVSPMLDLAQVTDASDKLLALLSDVLAYVEDVLSEKQQPENTVGRALLDLIHSVPNMTGDQFAQMFNSNVKDLLMVVTLSQLIKTQLQLNEKLTSLTSFLN</sequence>
<reference key="1">
    <citation type="journal article" date="2002" name="Science">
        <title>The genome sequence of the malaria mosquito Anopheles gambiae.</title>
        <authorList>
            <person name="Holt R.A."/>
            <person name="Subramanian G.M."/>
            <person name="Halpern A."/>
            <person name="Sutton G.G."/>
            <person name="Charlab R."/>
            <person name="Nusskern D.R."/>
            <person name="Wincker P."/>
            <person name="Clark A.G."/>
            <person name="Ribeiro J.M.C."/>
            <person name="Wides R."/>
            <person name="Salzberg S.L."/>
            <person name="Loftus B.J."/>
            <person name="Yandell M.D."/>
            <person name="Majoros W.H."/>
            <person name="Rusch D.B."/>
            <person name="Lai Z."/>
            <person name="Kraft C.L."/>
            <person name="Abril J.F."/>
            <person name="Anthouard V."/>
            <person name="Arensburger P."/>
            <person name="Atkinson P.W."/>
            <person name="Baden H."/>
            <person name="de Berardinis V."/>
            <person name="Baldwin D."/>
            <person name="Benes V."/>
            <person name="Biedler J."/>
            <person name="Blass C."/>
            <person name="Bolanos R."/>
            <person name="Boscus D."/>
            <person name="Barnstead M."/>
            <person name="Cai S."/>
            <person name="Center A."/>
            <person name="Chaturverdi K."/>
            <person name="Christophides G.K."/>
            <person name="Chrystal M.A.M."/>
            <person name="Clamp M."/>
            <person name="Cravchik A."/>
            <person name="Curwen V."/>
            <person name="Dana A."/>
            <person name="Delcher A."/>
            <person name="Dew I."/>
            <person name="Evans C.A."/>
            <person name="Flanigan M."/>
            <person name="Grundschober-Freimoser A."/>
            <person name="Friedli L."/>
            <person name="Gu Z."/>
            <person name="Guan P."/>
            <person name="Guigo R."/>
            <person name="Hillenmeyer M.E."/>
            <person name="Hladun S.L."/>
            <person name="Hogan J.R."/>
            <person name="Hong Y.S."/>
            <person name="Hoover J."/>
            <person name="Jaillon O."/>
            <person name="Ke Z."/>
            <person name="Kodira C.D."/>
            <person name="Kokoza E."/>
            <person name="Koutsos A."/>
            <person name="Letunic I."/>
            <person name="Levitsky A.A."/>
            <person name="Liang Y."/>
            <person name="Lin J.-J."/>
            <person name="Lobo N.F."/>
            <person name="Lopez J.R."/>
            <person name="Malek J.A."/>
            <person name="McIntosh T.C."/>
            <person name="Meister S."/>
            <person name="Miller J.R."/>
            <person name="Mobarry C."/>
            <person name="Mongin E."/>
            <person name="Murphy S.D."/>
            <person name="O'Brochta D.A."/>
            <person name="Pfannkoch C."/>
            <person name="Qi R."/>
            <person name="Regier M.A."/>
            <person name="Remington K."/>
            <person name="Shao H."/>
            <person name="Sharakhova M.V."/>
            <person name="Sitter C.D."/>
            <person name="Shetty J."/>
            <person name="Smith T.J."/>
            <person name="Strong R."/>
            <person name="Sun J."/>
            <person name="Thomasova D."/>
            <person name="Ton L.Q."/>
            <person name="Topalis P."/>
            <person name="Tu Z.J."/>
            <person name="Unger M.F."/>
            <person name="Walenz B."/>
            <person name="Wang A.H."/>
            <person name="Wang J."/>
            <person name="Wang M."/>
            <person name="Wang X."/>
            <person name="Woodford K.J."/>
            <person name="Wortman J.R."/>
            <person name="Wu M."/>
            <person name="Yao A."/>
            <person name="Zdobnov E.M."/>
            <person name="Zhang H."/>
            <person name="Zhao Q."/>
            <person name="Zhao S."/>
            <person name="Zhu S.C."/>
            <person name="Zhimulev I."/>
            <person name="Coluzzi M."/>
            <person name="della Torre A."/>
            <person name="Roth C.W."/>
            <person name="Louis C."/>
            <person name="Kalush F."/>
            <person name="Mural R.J."/>
            <person name="Myers E.W."/>
            <person name="Adams M.D."/>
            <person name="Smith H.O."/>
            <person name="Broder S."/>
            <person name="Gardner M.J."/>
            <person name="Fraser C.M."/>
            <person name="Birney E."/>
            <person name="Bork P."/>
            <person name="Brey P.T."/>
            <person name="Venter J.C."/>
            <person name="Weissenbach J."/>
            <person name="Kafatos F.C."/>
            <person name="Collins F.H."/>
            <person name="Hoffman S.L."/>
        </authorList>
    </citation>
    <scope>NUCLEOTIDE SEQUENCE [LARGE SCALE GENOMIC DNA]</scope>
    <source>
        <strain>PEST</strain>
    </source>
</reference>
<evidence type="ECO:0000255" key="1">
    <source>
        <dbReference type="HAMAP-Rule" id="MF_03005"/>
    </source>
</evidence>
<evidence type="ECO:0000255" key="2">
    <source>
        <dbReference type="PROSITE-ProRule" id="PRU01182"/>
    </source>
</evidence>
<gene>
    <name evidence="1" type="primary">eIF3-S5</name>
    <name type="ORF">AGAP002935</name>
</gene>
<keyword id="KW-0963">Cytoplasm</keyword>
<keyword id="KW-0396">Initiation factor</keyword>
<keyword id="KW-0648">Protein biosynthesis</keyword>
<keyword id="KW-1185">Reference proteome</keyword>
<proteinExistence type="inferred from homology"/>
<dbReference type="EMBL" id="AAAB01008859">
    <property type="protein sequence ID" value="EAA07604.3"/>
    <property type="molecule type" value="Genomic_DNA"/>
</dbReference>
<dbReference type="SMR" id="Q7QD36"/>
<dbReference type="FunCoup" id="Q7QD36">
    <property type="interactions" value="2416"/>
</dbReference>
<dbReference type="STRING" id="7165.Q7QD36"/>
<dbReference type="MEROPS" id="M67.974"/>
<dbReference type="PaxDb" id="7165-AGAP002935-PA"/>
<dbReference type="EnsemblMetazoa" id="AGAP002935-RA">
    <property type="protein sequence ID" value="AGAP002935-PA"/>
    <property type="gene ID" value="AGAP002935"/>
</dbReference>
<dbReference type="GeneID" id="1273028"/>
<dbReference type="KEGG" id="aga:1273028"/>
<dbReference type="CTD" id="40587"/>
<dbReference type="VEuPathDB" id="VectorBase:AGAMI1_003242"/>
<dbReference type="VEuPathDB" id="VectorBase:AGAP002935"/>
<dbReference type="eggNOG" id="KOG2975">
    <property type="taxonomic scope" value="Eukaryota"/>
</dbReference>
<dbReference type="HOGENOM" id="CLU_027018_0_1_1"/>
<dbReference type="InParanoid" id="Q7QD36"/>
<dbReference type="OMA" id="EYFVHFH"/>
<dbReference type="OrthoDB" id="25498at2759"/>
<dbReference type="PhylomeDB" id="Q7QD36"/>
<dbReference type="Proteomes" id="UP000007062">
    <property type="component" value="Chromosome 2R"/>
</dbReference>
<dbReference type="GO" id="GO:0016282">
    <property type="term" value="C:eukaryotic 43S preinitiation complex"/>
    <property type="evidence" value="ECO:0007669"/>
    <property type="project" value="UniProtKB-UniRule"/>
</dbReference>
<dbReference type="GO" id="GO:0033290">
    <property type="term" value="C:eukaryotic 48S preinitiation complex"/>
    <property type="evidence" value="ECO:0007669"/>
    <property type="project" value="UniProtKB-UniRule"/>
</dbReference>
<dbReference type="GO" id="GO:0071541">
    <property type="term" value="C:eukaryotic translation initiation factor 3 complex, eIF3m"/>
    <property type="evidence" value="ECO:0000318"/>
    <property type="project" value="GO_Central"/>
</dbReference>
<dbReference type="GO" id="GO:0008237">
    <property type="term" value="F:metallopeptidase activity"/>
    <property type="evidence" value="ECO:0007669"/>
    <property type="project" value="InterPro"/>
</dbReference>
<dbReference type="GO" id="GO:0003743">
    <property type="term" value="F:translation initiation factor activity"/>
    <property type="evidence" value="ECO:0007669"/>
    <property type="project" value="UniProtKB-UniRule"/>
</dbReference>
<dbReference type="GO" id="GO:0031369">
    <property type="term" value="F:translation initiation factor binding"/>
    <property type="evidence" value="ECO:0000318"/>
    <property type="project" value="GO_Central"/>
</dbReference>
<dbReference type="GO" id="GO:0001732">
    <property type="term" value="P:formation of cytoplasmic translation initiation complex"/>
    <property type="evidence" value="ECO:0007669"/>
    <property type="project" value="UniProtKB-UniRule"/>
</dbReference>
<dbReference type="GO" id="GO:0006413">
    <property type="term" value="P:translational initiation"/>
    <property type="evidence" value="ECO:0000318"/>
    <property type="project" value="GO_Central"/>
</dbReference>
<dbReference type="CDD" id="cd08064">
    <property type="entry name" value="MPN_eIF3f"/>
    <property type="match status" value="1"/>
</dbReference>
<dbReference type="FunFam" id="3.40.140.10:FF:000014">
    <property type="entry name" value="Eukaryotic translation initiation factor 3 subunit F"/>
    <property type="match status" value="1"/>
</dbReference>
<dbReference type="Gene3D" id="3.40.140.10">
    <property type="entry name" value="Cytidine Deaminase, domain 2"/>
    <property type="match status" value="1"/>
</dbReference>
<dbReference type="HAMAP" id="MF_03005">
    <property type="entry name" value="eIF3f"/>
    <property type="match status" value="1"/>
</dbReference>
<dbReference type="InterPro" id="IPR027531">
    <property type="entry name" value="eIF3f"/>
</dbReference>
<dbReference type="InterPro" id="IPR024969">
    <property type="entry name" value="EIF3F/CSN6-like_C"/>
</dbReference>
<dbReference type="InterPro" id="IPR000555">
    <property type="entry name" value="JAMM/MPN+_dom"/>
</dbReference>
<dbReference type="InterPro" id="IPR037518">
    <property type="entry name" value="MPN"/>
</dbReference>
<dbReference type="PANTHER" id="PTHR10540:SF6">
    <property type="entry name" value="EUKARYOTIC TRANSLATION INITIATION FACTOR 3 SUBUNIT F"/>
    <property type="match status" value="1"/>
</dbReference>
<dbReference type="PANTHER" id="PTHR10540">
    <property type="entry name" value="EUKARYOTIC TRANSLATION INITIATION FACTOR 3 SUBUNIT F-RELATED"/>
    <property type="match status" value="1"/>
</dbReference>
<dbReference type="Pfam" id="PF01398">
    <property type="entry name" value="JAB"/>
    <property type="match status" value="1"/>
</dbReference>
<dbReference type="Pfam" id="PF13012">
    <property type="entry name" value="MitMem_reg"/>
    <property type="match status" value="1"/>
</dbReference>
<dbReference type="SMART" id="SM00232">
    <property type="entry name" value="JAB_MPN"/>
    <property type="match status" value="1"/>
</dbReference>
<dbReference type="PROSITE" id="PS50249">
    <property type="entry name" value="MPN"/>
    <property type="match status" value="1"/>
</dbReference>
<organism>
    <name type="scientific">Anopheles gambiae</name>
    <name type="common">African malaria mosquito</name>
    <dbReference type="NCBI Taxonomy" id="7165"/>
    <lineage>
        <taxon>Eukaryota</taxon>
        <taxon>Metazoa</taxon>
        <taxon>Ecdysozoa</taxon>
        <taxon>Arthropoda</taxon>
        <taxon>Hexapoda</taxon>
        <taxon>Insecta</taxon>
        <taxon>Pterygota</taxon>
        <taxon>Neoptera</taxon>
        <taxon>Endopterygota</taxon>
        <taxon>Diptera</taxon>
        <taxon>Nematocera</taxon>
        <taxon>Culicoidea</taxon>
        <taxon>Culicidae</taxon>
        <taxon>Anophelinae</taxon>
        <taxon>Anopheles</taxon>
    </lineage>
</organism>
<feature type="chain" id="PRO_0000364294" description="Eukaryotic translation initiation factor 3 subunit F">
    <location>
        <begin position="1"/>
        <end position="287"/>
    </location>
</feature>
<feature type="domain" description="MPN" evidence="2">
    <location>
        <begin position="12"/>
        <end position="142"/>
    </location>
</feature>